<gene>
    <name type="primary">COPT3</name>
    <name type="ordered locus">Os01g0770800</name>
    <name type="ordered locus">LOC_Os01g56430</name>
    <name type="ORF">P0665A11.23</name>
</gene>
<keyword id="KW-0186">Copper</keyword>
<keyword id="KW-0187">Copper transport</keyword>
<keyword id="KW-0406">Ion transport</keyword>
<keyword id="KW-0472">Membrane</keyword>
<keyword id="KW-1185">Reference proteome</keyword>
<keyword id="KW-0812">Transmembrane</keyword>
<keyword id="KW-1133">Transmembrane helix</keyword>
<keyword id="KW-0813">Transport</keyword>
<protein>
    <recommendedName>
        <fullName>Copper transporter 3</fullName>
        <shortName>OsCOPT3</shortName>
    </recommendedName>
</protein>
<sequence length="150" mass="15528">MADMGRHGMAMAMAPAAAGGAGRRKRYMHMTFYWGKNSEILFTGWPGASGGMYALALAAVFALAVLLEFLGSPRVQESSSLGSRRRRATAAAVHAVRVGLAYLLMLALMSFNVGVLLAAVAGHAAGFLAFRAGLCGGGYKKGELAPAACC</sequence>
<reference key="1">
    <citation type="journal article" date="2002" name="Nature">
        <title>The genome sequence and structure of rice chromosome 1.</title>
        <authorList>
            <person name="Sasaki T."/>
            <person name="Matsumoto T."/>
            <person name="Yamamoto K."/>
            <person name="Sakata K."/>
            <person name="Baba T."/>
            <person name="Katayose Y."/>
            <person name="Wu J."/>
            <person name="Niimura Y."/>
            <person name="Cheng Z."/>
            <person name="Nagamura Y."/>
            <person name="Antonio B.A."/>
            <person name="Kanamori H."/>
            <person name="Hosokawa S."/>
            <person name="Masukawa M."/>
            <person name="Arikawa K."/>
            <person name="Chiden Y."/>
            <person name="Hayashi M."/>
            <person name="Okamoto M."/>
            <person name="Ando T."/>
            <person name="Aoki H."/>
            <person name="Arita K."/>
            <person name="Hamada M."/>
            <person name="Harada C."/>
            <person name="Hijishita S."/>
            <person name="Honda M."/>
            <person name="Ichikawa Y."/>
            <person name="Idonuma A."/>
            <person name="Iijima M."/>
            <person name="Ikeda M."/>
            <person name="Ikeno M."/>
            <person name="Ito S."/>
            <person name="Ito T."/>
            <person name="Ito Y."/>
            <person name="Ito Y."/>
            <person name="Iwabuchi A."/>
            <person name="Kamiya K."/>
            <person name="Karasawa W."/>
            <person name="Katagiri S."/>
            <person name="Kikuta A."/>
            <person name="Kobayashi N."/>
            <person name="Kono I."/>
            <person name="Machita K."/>
            <person name="Maehara T."/>
            <person name="Mizuno H."/>
            <person name="Mizubayashi T."/>
            <person name="Mukai Y."/>
            <person name="Nagasaki H."/>
            <person name="Nakashima M."/>
            <person name="Nakama Y."/>
            <person name="Nakamichi Y."/>
            <person name="Nakamura M."/>
            <person name="Namiki N."/>
            <person name="Negishi M."/>
            <person name="Ohta I."/>
            <person name="Ono N."/>
            <person name="Saji S."/>
            <person name="Sakai K."/>
            <person name="Shibata M."/>
            <person name="Shimokawa T."/>
            <person name="Shomura A."/>
            <person name="Song J."/>
            <person name="Takazaki Y."/>
            <person name="Terasawa K."/>
            <person name="Tsuji K."/>
            <person name="Waki K."/>
            <person name="Yamagata H."/>
            <person name="Yamane H."/>
            <person name="Yoshiki S."/>
            <person name="Yoshihara R."/>
            <person name="Yukawa K."/>
            <person name="Zhong H."/>
            <person name="Iwama H."/>
            <person name="Endo T."/>
            <person name="Ito H."/>
            <person name="Hahn J.H."/>
            <person name="Kim H.-I."/>
            <person name="Eun M.-Y."/>
            <person name="Yano M."/>
            <person name="Jiang J."/>
            <person name="Gojobori T."/>
        </authorList>
    </citation>
    <scope>NUCLEOTIDE SEQUENCE [LARGE SCALE GENOMIC DNA]</scope>
    <source>
        <strain>cv. Nipponbare</strain>
    </source>
</reference>
<reference key="2">
    <citation type="journal article" date="2005" name="Nature">
        <title>The map-based sequence of the rice genome.</title>
        <authorList>
            <consortium name="International rice genome sequencing project (IRGSP)"/>
        </authorList>
    </citation>
    <scope>NUCLEOTIDE SEQUENCE [LARGE SCALE GENOMIC DNA]</scope>
    <source>
        <strain>cv. Nipponbare</strain>
    </source>
</reference>
<reference key="3">
    <citation type="journal article" date="2008" name="Nucleic Acids Res.">
        <title>The rice annotation project database (RAP-DB): 2008 update.</title>
        <authorList>
            <consortium name="The rice annotation project (RAP)"/>
        </authorList>
    </citation>
    <scope>GENOME REANNOTATION</scope>
    <source>
        <strain>cv. Nipponbare</strain>
    </source>
</reference>
<reference key="4">
    <citation type="journal article" date="2013" name="Rice">
        <title>Improvement of the Oryza sativa Nipponbare reference genome using next generation sequence and optical map data.</title>
        <authorList>
            <person name="Kawahara Y."/>
            <person name="de la Bastide M."/>
            <person name="Hamilton J.P."/>
            <person name="Kanamori H."/>
            <person name="McCombie W.R."/>
            <person name="Ouyang S."/>
            <person name="Schwartz D.C."/>
            <person name="Tanaka T."/>
            <person name="Wu J."/>
            <person name="Zhou S."/>
            <person name="Childs K.L."/>
            <person name="Davidson R.M."/>
            <person name="Lin H."/>
            <person name="Quesada-Ocampo L."/>
            <person name="Vaillancourt B."/>
            <person name="Sakai H."/>
            <person name="Lee S.S."/>
            <person name="Kim J."/>
            <person name="Numa H."/>
            <person name="Itoh T."/>
            <person name="Buell C.R."/>
            <person name="Matsumoto T."/>
        </authorList>
    </citation>
    <scope>GENOME REANNOTATION</scope>
    <source>
        <strain>cv. Nipponbare</strain>
    </source>
</reference>
<reference key="5">
    <citation type="journal article" date="2003" name="Science">
        <title>Collection, mapping, and annotation of over 28,000 cDNA clones from japonica rice.</title>
        <authorList>
            <consortium name="The rice full-length cDNA consortium"/>
        </authorList>
    </citation>
    <scope>NUCLEOTIDE SEQUENCE [LARGE SCALE MRNA]</scope>
    <source>
        <strain>cv. Nipponbare</strain>
    </source>
</reference>
<proteinExistence type="evidence at transcript level"/>
<organism>
    <name type="scientific">Oryza sativa subsp. japonica</name>
    <name type="common">Rice</name>
    <dbReference type="NCBI Taxonomy" id="39947"/>
    <lineage>
        <taxon>Eukaryota</taxon>
        <taxon>Viridiplantae</taxon>
        <taxon>Streptophyta</taxon>
        <taxon>Embryophyta</taxon>
        <taxon>Tracheophyta</taxon>
        <taxon>Spermatophyta</taxon>
        <taxon>Magnoliopsida</taxon>
        <taxon>Liliopsida</taxon>
        <taxon>Poales</taxon>
        <taxon>Poaceae</taxon>
        <taxon>BOP clade</taxon>
        <taxon>Oryzoideae</taxon>
        <taxon>Oryzeae</taxon>
        <taxon>Oryzinae</taxon>
        <taxon>Oryza</taxon>
        <taxon>Oryza sativa</taxon>
    </lineage>
</organism>
<dbReference type="EMBL" id="AP003106">
    <property type="protein sequence ID" value="BAD52722.1"/>
    <property type="molecule type" value="Genomic_DNA"/>
</dbReference>
<dbReference type="EMBL" id="AP008207">
    <property type="protein sequence ID" value="BAF06294.2"/>
    <property type="molecule type" value="Genomic_DNA"/>
</dbReference>
<dbReference type="EMBL" id="AP014957">
    <property type="protein sequence ID" value="BAS74551.1"/>
    <property type="molecule type" value="Genomic_DNA"/>
</dbReference>
<dbReference type="EMBL" id="AK109200">
    <property type="protein sequence ID" value="BAG98635.1"/>
    <property type="molecule type" value="mRNA"/>
</dbReference>
<dbReference type="RefSeq" id="XP_015647285.1">
    <property type="nucleotide sequence ID" value="XM_015791799.1"/>
</dbReference>
<dbReference type="SMR" id="Q5ZD08"/>
<dbReference type="FunCoup" id="Q5ZD08">
    <property type="interactions" value="707"/>
</dbReference>
<dbReference type="STRING" id="39947.Q5ZD08"/>
<dbReference type="TCDB" id="1.A.56.1.13">
    <property type="family name" value="the copper transporter (ctr) family"/>
</dbReference>
<dbReference type="PaxDb" id="39947-Q5ZD08"/>
<dbReference type="EnsemblPlants" id="Os01t0770800-01">
    <property type="protein sequence ID" value="Os01t0770800-01"/>
    <property type="gene ID" value="Os01g0770800"/>
</dbReference>
<dbReference type="Gramene" id="Os01t0770800-01">
    <property type="protein sequence ID" value="Os01t0770800-01"/>
    <property type="gene ID" value="Os01g0770800"/>
</dbReference>
<dbReference type="KEGG" id="dosa:Os01g0770800"/>
<dbReference type="eggNOG" id="KOG3386">
    <property type="taxonomic scope" value="Eukaryota"/>
</dbReference>
<dbReference type="HOGENOM" id="CLU_079690_1_0_1"/>
<dbReference type="InParanoid" id="Q5ZD08"/>
<dbReference type="OMA" id="GTRTSMY"/>
<dbReference type="Proteomes" id="UP000000763">
    <property type="component" value="Chromosome 1"/>
</dbReference>
<dbReference type="Proteomes" id="UP000059680">
    <property type="component" value="Chromosome 1"/>
</dbReference>
<dbReference type="ExpressionAtlas" id="Q5ZD08">
    <property type="expression patterns" value="baseline and differential"/>
</dbReference>
<dbReference type="GO" id="GO:0005886">
    <property type="term" value="C:plasma membrane"/>
    <property type="evidence" value="ECO:0000318"/>
    <property type="project" value="GO_Central"/>
</dbReference>
<dbReference type="GO" id="GO:0005375">
    <property type="term" value="F:copper ion transmembrane transporter activity"/>
    <property type="evidence" value="ECO:0000318"/>
    <property type="project" value="GO_Central"/>
</dbReference>
<dbReference type="InterPro" id="IPR007274">
    <property type="entry name" value="Cop_transporter"/>
</dbReference>
<dbReference type="PANTHER" id="PTHR12483:SF117">
    <property type="entry name" value="COPPER TRANSPORTER 3"/>
    <property type="match status" value="1"/>
</dbReference>
<dbReference type="PANTHER" id="PTHR12483">
    <property type="entry name" value="SOLUTE CARRIER FAMILY 31 COPPER TRANSPORTERS"/>
    <property type="match status" value="1"/>
</dbReference>
<dbReference type="Pfam" id="PF04145">
    <property type="entry name" value="Ctr"/>
    <property type="match status" value="2"/>
</dbReference>
<name>COPT3_ORYSJ</name>
<accession>Q5ZD08</accession>
<accession>Q0JIY4</accession>
<feature type="chain" id="PRO_0000400000" description="Copper transporter 3">
    <location>
        <begin position="1"/>
        <end position="150"/>
    </location>
</feature>
<feature type="transmembrane region" description="Helical" evidence="2">
    <location>
        <begin position="50"/>
        <end position="70"/>
    </location>
</feature>
<feature type="transmembrane region" description="Helical" evidence="2">
    <location>
        <begin position="100"/>
        <end position="120"/>
    </location>
</feature>
<comment type="function">
    <text evidence="1">Involved in the transport of copper.</text>
</comment>
<comment type="subcellular location">
    <subcellularLocation>
        <location evidence="3">Membrane</location>
        <topology evidence="3">Multi-pass membrane protein</topology>
    </subcellularLocation>
</comment>
<comment type="similarity">
    <text evidence="3">Belongs to the copper transporter (Ctr) (TC 1.A.56) family. SLC31A subfamily.</text>
</comment>
<evidence type="ECO:0000250" key="1"/>
<evidence type="ECO:0000255" key="2"/>
<evidence type="ECO:0000305" key="3"/>